<sequence length="532" mass="59825">MVKRVAIVGAGVSGLASIKCCLEEGLEPTCFERSCDLGGLWRFTEHVEEGRASLYNSVVSNSSKEMSCYSDFPFPEDYPNFVPNSLFLEYLQLYATQFNLLRCIYFNTKVCSITKRPDFAVSGQWEVVTVCQGKQSSDTFDAVMVCTGFLTNPHLPLDSFPGIQTFKGQYFHSRQYKHPDVFKDKRVLVVGMGNSGTDIAVEASHLAKKVFLSTTGGAWVISRVFDSGYPWDMIFMTRFQNMLRNLLPTPVVSWLISKKMNSWFNHVNYGVAPEDRTQLREPVLNDELPGRIITGKVLIKPSIKEVKENSVVFNNTPKEEPIDVIVFATGYSFAFPFLDESIVKVEDGQASLYKYIFPAHLPKPTLAVIGLIKPLGSMIPTGETQARWVVQVLKGATTLPPPSVMMKEVNERKKNKHSGFGLCYCKALQSDYITYIDDLLTSINAKPDLRAMLLTDPRLALSIFFGPCTPYHFRLTGPGKWEGARKAILTQWDRTVNVTKTRTVQETPSTFETLLKLFSFLALLVAVFFIFL</sequence>
<dbReference type="EC" id="1.14.13.148" evidence="5"/>
<dbReference type="EC" id="1.14.13.8" evidence="5"/>
<dbReference type="EMBL" id="M84719">
    <property type="protein sequence ID" value="AAA41165.1"/>
    <property type="molecule type" value="mRNA"/>
</dbReference>
<dbReference type="EMBL" id="BC061567">
    <property type="protein sequence ID" value="AAH61567.1"/>
    <property type="molecule type" value="mRNA"/>
</dbReference>
<dbReference type="PIR" id="S33758">
    <property type="entry name" value="S33758"/>
</dbReference>
<dbReference type="RefSeq" id="NP_036924.1">
    <property type="nucleotide sequence ID" value="NM_012792.1"/>
</dbReference>
<dbReference type="RefSeq" id="XP_006250207.1">
    <property type="nucleotide sequence ID" value="XM_006250145.5"/>
</dbReference>
<dbReference type="RefSeq" id="XP_006250208.1">
    <property type="nucleotide sequence ID" value="XM_006250146.3"/>
</dbReference>
<dbReference type="SMR" id="P36365"/>
<dbReference type="FunCoup" id="P36365">
    <property type="interactions" value="92"/>
</dbReference>
<dbReference type="STRING" id="10116.ENSRNOP00000044613"/>
<dbReference type="iPTMnet" id="P36365"/>
<dbReference type="PhosphoSitePlus" id="P36365"/>
<dbReference type="PaxDb" id="10116-ENSRNOP00000044613"/>
<dbReference type="Ensembl" id="ENSRNOT00000041908.4">
    <property type="protein sequence ID" value="ENSRNOP00000044613.1"/>
    <property type="gene ID" value="ENSRNOG00000034191.5"/>
</dbReference>
<dbReference type="GeneID" id="25256"/>
<dbReference type="KEGG" id="rno:25256"/>
<dbReference type="UCSC" id="RGD:2622">
    <property type="organism name" value="rat"/>
</dbReference>
<dbReference type="AGR" id="RGD:2622"/>
<dbReference type="CTD" id="2326"/>
<dbReference type="RGD" id="2622">
    <property type="gene designation" value="Fmo1"/>
</dbReference>
<dbReference type="eggNOG" id="KOG1399">
    <property type="taxonomic scope" value="Eukaryota"/>
</dbReference>
<dbReference type="GeneTree" id="ENSGT00940000160945"/>
<dbReference type="HOGENOM" id="CLU_006909_8_2_1"/>
<dbReference type="InParanoid" id="P36365"/>
<dbReference type="OMA" id="VMIKEVN"/>
<dbReference type="OrthoDB" id="66881at2759"/>
<dbReference type="PhylomeDB" id="P36365"/>
<dbReference type="TreeFam" id="TF105285"/>
<dbReference type="BioCyc" id="MetaCyc:MONOMER-13317"/>
<dbReference type="BRENDA" id="1.14.13.8">
    <property type="organism ID" value="5301"/>
</dbReference>
<dbReference type="Reactome" id="R-RNO-1614558">
    <property type="pathway name" value="Degradation of cysteine and homocysteine"/>
</dbReference>
<dbReference type="Reactome" id="R-RNO-217271">
    <property type="pathway name" value="FMO oxidises nucleophiles"/>
</dbReference>
<dbReference type="SABIO-RK" id="P36365"/>
<dbReference type="PRO" id="PR:P36365"/>
<dbReference type="Proteomes" id="UP000002494">
    <property type="component" value="Chromosome 13"/>
</dbReference>
<dbReference type="Bgee" id="ENSRNOG00000034191">
    <property type="expression patterns" value="Expressed in adult mammalian kidney and 16 other cell types or tissues"/>
</dbReference>
<dbReference type="GO" id="GO:0005789">
    <property type="term" value="C:endoplasmic reticulum membrane"/>
    <property type="evidence" value="ECO:0000250"/>
    <property type="project" value="UniProtKB"/>
</dbReference>
<dbReference type="GO" id="GO:0050660">
    <property type="term" value="F:flavin adenine dinucleotide binding"/>
    <property type="evidence" value="ECO:0007669"/>
    <property type="project" value="InterPro"/>
</dbReference>
<dbReference type="GO" id="GO:0047822">
    <property type="term" value="F:hypotaurine monooxygenase activity"/>
    <property type="evidence" value="ECO:0000250"/>
    <property type="project" value="UniProtKB"/>
</dbReference>
<dbReference type="GO" id="GO:0004497">
    <property type="term" value="F:monooxygenase activity"/>
    <property type="evidence" value="ECO:0000314"/>
    <property type="project" value="RGD"/>
</dbReference>
<dbReference type="GO" id="GO:0004499">
    <property type="term" value="F:N,N-dimethylaniline monooxygenase activity"/>
    <property type="evidence" value="ECO:0000314"/>
    <property type="project" value="RGD"/>
</dbReference>
<dbReference type="GO" id="GO:0050661">
    <property type="term" value="F:NADP binding"/>
    <property type="evidence" value="ECO:0007669"/>
    <property type="project" value="InterPro"/>
</dbReference>
<dbReference type="GO" id="GO:0034899">
    <property type="term" value="F:trimethylamine monooxygenase activity"/>
    <property type="evidence" value="ECO:0000314"/>
    <property type="project" value="UniProtKB"/>
</dbReference>
<dbReference type="GO" id="GO:0097009">
    <property type="term" value="P:energy homeostasis"/>
    <property type="evidence" value="ECO:0000266"/>
    <property type="project" value="RGD"/>
</dbReference>
<dbReference type="GO" id="GO:0046322">
    <property type="term" value="P:negative regulation of fatty acid oxidation"/>
    <property type="evidence" value="ECO:0000266"/>
    <property type="project" value="RGD"/>
</dbReference>
<dbReference type="GO" id="GO:0006082">
    <property type="term" value="P:organic acid metabolic process"/>
    <property type="evidence" value="ECO:0000266"/>
    <property type="project" value="RGD"/>
</dbReference>
<dbReference type="GO" id="GO:0032496">
    <property type="term" value="P:response to lipopolysaccharide"/>
    <property type="evidence" value="ECO:0000270"/>
    <property type="project" value="RGD"/>
</dbReference>
<dbReference type="GO" id="GO:0042412">
    <property type="term" value="P:taurine biosynthetic process"/>
    <property type="evidence" value="ECO:0000250"/>
    <property type="project" value="UniProtKB"/>
</dbReference>
<dbReference type="GO" id="GO:0009404">
    <property type="term" value="P:toxin metabolic process"/>
    <property type="evidence" value="ECO:0000266"/>
    <property type="project" value="RGD"/>
</dbReference>
<dbReference type="GO" id="GO:0006805">
    <property type="term" value="P:xenobiotic metabolic process"/>
    <property type="evidence" value="ECO:0000266"/>
    <property type="project" value="RGD"/>
</dbReference>
<dbReference type="FunFam" id="3.50.50.60:FF:000159">
    <property type="entry name" value="Dimethylaniline monooxygenase [N-oxide-forming]"/>
    <property type="match status" value="1"/>
</dbReference>
<dbReference type="Gene3D" id="3.50.50.60">
    <property type="entry name" value="FAD/NAD(P)-binding domain"/>
    <property type="match status" value="1"/>
</dbReference>
<dbReference type="InterPro" id="IPR036188">
    <property type="entry name" value="FAD/NAD-bd_sf"/>
</dbReference>
<dbReference type="InterPro" id="IPR000960">
    <property type="entry name" value="Flavin_mOase"/>
</dbReference>
<dbReference type="InterPro" id="IPR020946">
    <property type="entry name" value="Flavin_mOase-like"/>
</dbReference>
<dbReference type="InterPro" id="IPR002253">
    <property type="entry name" value="Flavin_mOase_1"/>
</dbReference>
<dbReference type="InterPro" id="IPR050346">
    <property type="entry name" value="FMO-like"/>
</dbReference>
<dbReference type="PANTHER" id="PTHR23023">
    <property type="entry name" value="DIMETHYLANILINE MONOOXYGENASE"/>
    <property type="match status" value="1"/>
</dbReference>
<dbReference type="Pfam" id="PF00743">
    <property type="entry name" value="FMO-like"/>
    <property type="match status" value="1"/>
</dbReference>
<dbReference type="PIRSF" id="PIRSF000332">
    <property type="entry name" value="FMO"/>
    <property type="match status" value="1"/>
</dbReference>
<dbReference type="PRINTS" id="PR00370">
    <property type="entry name" value="FMOXYGENASE"/>
</dbReference>
<dbReference type="PRINTS" id="PR01121">
    <property type="entry name" value="FMOXYGENASE1"/>
</dbReference>
<dbReference type="SUPFAM" id="SSF51905">
    <property type="entry name" value="FAD/NAD(P)-binding domain"/>
    <property type="match status" value="2"/>
</dbReference>
<keyword id="KW-0903">Direct protein sequencing</keyword>
<keyword id="KW-0256">Endoplasmic reticulum</keyword>
<keyword id="KW-0274">FAD</keyword>
<keyword id="KW-0285">Flavoprotein</keyword>
<keyword id="KW-0472">Membrane</keyword>
<keyword id="KW-0503">Monooxygenase</keyword>
<keyword id="KW-0521">NADP</keyword>
<keyword id="KW-0560">Oxidoreductase</keyword>
<keyword id="KW-1185">Reference proteome</keyword>
<keyword id="KW-0812">Transmembrane</keyword>
<keyword id="KW-1133">Transmembrane helix</keyword>
<reference key="1">
    <citation type="journal article" date="1993" name="Biochim. Biophys. Acta">
        <title>Rat liver flavin-containing monooxygenase (FMO): cDNA cloning and expression in yeast.</title>
        <authorList>
            <person name="Itoh K."/>
            <person name="Kimura T."/>
            <person name="Yokoi T."/>
            <person name="Itoh S."/>
            <person name="Kamataki T."/>
        </authorList>
    </citation>
    <scope>NUCLEOTIDE SEQUENCE [MRNA]</scope>
    <scope>FUNCTION</scope>
    <scope>CATALYTIC ACTIVITY</scope>
    <scope>BIOPHYSICOCHEMICAL PROPERTIES</scope>
    <scope>SUBCELLULAR LOCATION</scope>
    <scope>TISSUE SPECIFICITY</scope>
    <source>
        <strain>Sprague-Dawley</strain>
        <tissue>Liver</tissue>
    </source>
</reference>
<reference key="2">
    <citation type="journal article" date="2004" name="Genome Res.">
        <title>The status, quality, and expansion of the NIH full-length cDNA project: the Mammalian Gene Collection (MGC).</title>
        <authorList>
            <consortium name="The MGC Project Team"/>
        </authorList>
    </citation>
    <scope>NUCLEOTIDE SEQUENCE [LARGE SCALE MRNA]</scope>
    <source>
        <tissue>Pituitary</tissue>
    </source>
</reference>
<reference key="3">
    <citation type="journal article" date="1997" name="Cell">
        <title>Protein interactions regulating vesicle transport between the endoplasmic reticulum and Golgi apparatus in mammalian cells.</title>
        <authorList>
            <person name="Hay J.C."/>
            <person name="Chao D.S."/>
            <person name="Kuo C.S."/>
            <person name="Scheller R.H."/>
        </authorList>
    </citation>
    <scope>PROTEIN SEQUENCE OF 34-42 AND 52-56</scope>
    <source>
        <strain>Sprague-Dawley</strain>
        <tissue>Liver</tissue>
    </source>
</reference>
<protein>
    <recommendedName>
        <fullName evidence="8">Flavin-containing monooxygenase 1</fullName>
        <ecNumber evidence="5">1.14.13.148</ecNumber>
        <ecNumber evidence="5">1.14.13.8</ecNumber>
    </recommendedName>
    <alternativeName>
        <fullName>Dimethylaniline monooxygenase [N-oxide-forming] 1</fullName>
    </alternativeName>
    <alternativeName>
        <fullName>Dimethylaniline oxidase 1</fullName>
    </alternativeName>
    <alternativeName>
        <fullName>Hepatic flavin-containing monooxygenase 1</fullName>
        <shortName>FMO 1</shortName>
    </alternativeName>
    <alternativeName>
        <fullName>Trimethylamine monooxygenase</fullName>
    </alternativeName>
</protein>
<organism>
    <name type="scientific">Rattus norvegicus</name>
    <name type="common">Rat</name>
    <dbReference type="NCBI Taxonomy" id="10116"/>
    <lineage>
        <taxon>Eukaryota</taxon>
        <taxon>Metazoa</taxon>
        <taxon>Chordata</taxon>
        <taxon>Craniata</taxon>
        <taxon>Vertebrata</taxon>
        <taxon>Euteleostomi</taxon>
        <taxon>Mammalia</taxon>
        <taxon>Eutheria</taxon>
        <taxon>Euarchontoglires</taxon>
        <taxon>Glires</taxon>
        <taxon>Rodentia</taxon>
        <taxon>Myomorpha</taxon>
        <taxon>Muroidea</taxon>
        <taxon>Muridae</taxon>
        <taxon>Murinae</taxon>
        <taxon>Rattus</taxon>
    </lineage>
</organism>
<evidence type="ECO:0000250" key="1">
    <source>
        <dbReference type="UniProtKB" id="P16549"/>
    </source>
</evidence>
<evidence type="ECO:0000250" key="2">
    <source>
        <dbReference type="UniProtKB" id="Q01740"/>
    </source>
</evidence>
<evidence type="ECO:0000250" key="3">
    <source>
        <dbReference type="UniProtKB" id="Q9HFE4"/>
    </source>
</evidence>
<evidence type="ECO:0000255" key="4"/>
<evidence type="ECO:0000269" key="5">
    <source>
    </source>
</evidence>
<evidence type="ECO:0000303" key="6">
    <source>
    </source>
</evidence>
<evidence type="ECO:0000305" key="7"/>
<evidence type="ECO:0000305" key="8">
    <source>
    </source>
</evidence>
<evidence type="ECO:0000312" key="9">
    <source>
        <dbReference type="RGD" id="2622"/>
    </source>
</evidence>
<proteinExistence type="evidence at protein level"/>
<gene>
    <name evidence="9" type="primary">Fmo1</name>
    <name evidence="6" type="synonym">Fmo-1</name>
</gene>
<comment type="function">
    <text evidence="2 5">Broad spectrum monooxygenase that catalyzes the oxygenation of a wide variety of nitrogen- and sulfur-containing compounds including xenobiotics (PubMed:8504165). Catalyzes the S-oxygenation of hypotaurine to produce taurine, an organic osmolyte involved in cell volume regulation as well as a variety of cytoprotective and developmental processes (By similarity). In vitro, catalyzes the N-oxygenation of trimethylamine (TMA) to produce trimethylamine N-oxide (TMAO) and could therefore participate to the detoxification of this compound that is generated by the action of gut microbiota from dietary precursors such as choline, choline containing compounds, betaine or L-carnitine (PubMed:8504165).</text>
</comment>
<comment type="catalytic activity">
    <reaction evidence="2">
        <text>hypotaurine + NADPH + O2 + H(+) = taurine + NADP(+) + H2O</text>
        <dbReference type="Rhea" id="RHEA:69819"/>
        <dbReference type="ChEBI" id="CHEBI:15377"/>
        <dbReference type="ChEBI" id="CHEBI:15378"/>
        <dbReference type="ChEBI" id="CHEBI:15379"/>
        <dbReference type="ChEBI" id="CHEBI:57783"/>
        <dbReference type="ChEBI" id="CHEBI:57853"/>
        <dbReference type="ChEBI" id="CHEBI:58349"/>
        <dbReference type="ChEBI" id="CHEBI:507393"/>
        <dbReference type="EC" id="1.14.13.8"/>
    </reaction>
    <physiologicalReaction direction="left-to-right" evidence="2">
        <dbReference type="Rhea" id="RHEA:69820"/>
    </physiologicalReaction>
</comment>
<comment type="catalytic activity">
    <reaction evidence="2">
        <text>hypotaurine + NADH + O2 + H(+) = taurine + NAD(+) + H2O</text>
        <dbReference type="Rhea" id="RHEA:74111"/>
        <dbReference type="ChEBI" id="CHEBI:15377"/>
        <dbReference type="ChEBI" id="CHEBI:15378"/>
        <dbReference type="ChEBI" id="CHEBI:15379"/>
        <dbReference type="ChEBI" id="CHEBI:57540"/>
        <dbReference type="ChEBI" id="CHEBI:57853"/>
        <dbReference type="ChEBI" id="CHEBI:57945"/>
        <dbReference type="ChEBI" id="CHEBI:507393"/>
        <dbReference type="EC" id="1.14.13.8"/>
    </reaction>
    <physiologicalReaction direction="left-to-right" evidence="2">
        <dbReference type="Rhea" id="RHEA:74112"/>
    </physiologicalReaction>
</comment>
<comment type="catalytic activity">
    <reaction evidence="5">
        <text>trimethylamine + NADPH + O2 = trimethylamine N-oxide + NADP(+) + H2O</text>
        <dbReference type="Rhea" id="RHEA:31979"/>
        <dbReference type="ChEBI" id="CHEBI:15377"/>
        <dbReference type="ChEBI" id="CHEBI:15379"/>
        <dbReference type="ChEBI" id="CHEBI:15724"/>
        <dbReference type="ChEBI" id="CHEBI:57783"/>
        <dbReference type="ChEBI" id="CHEBI:58349"/>
        <dbReference type="ChEBI" id="CHEBI:58389"/>
        <dbReference type="EC" id="1.14.13.148"/>
    </reaction>
    <physiologicalReaction direction="left-to-right" evidence="8">
        <dbReference type="Rhea" id="RHEA:31980"/>
    </physiologicalReaction>
</comment>
<comment type="catalytic activity">
    <reaction evidence="5">
        <text>N,N-dimethylaniline + NADPH + O2 + H(+) = N,N-dimethylaniline N-oxide + NADP(+) + H2O</text>
        <dbReference type="Rhea" id="RHEA:24468"/>
        <dbReference type="ChEBI" id="CHEBI:15377"/>
        <dbReference type="ChEBI" id="CHEBI:15378"/>
        <dbReference type="ChEBI" id="CHEBI:15379"/>
        <dbReference type="ChEBI" id="CHEBI:16269"/>
        <dbReference type="ChEBI" id="CHEBI:17735"/>
        <dbReference type="ChEBI" id="CHEBI:57783"/>
        <dbReference type="ChEBI" id="CHEBI:58349"/>
        <dbReference type="EC" id="1.14.13.8"/>
    </reaction>
    <physiologicalReaction direction="left-to-right" evidence="8">
        <dbReference type="Rhea" id="RHEA:24469"/>
    </physiologicalReaction>
</comment>
<comment type="cofactor">
    <cofactor evidence="2">
        <name>FAD</name>
        <dbReference type="ChEBI" id="CHEBI:57692"/>
    </cofactor>
</comment>
<comment type="biophysicochemical properties">
    <kinetics>
        <Vmax evidence="5">2.56 nmol/min/mg enzyme with N,N-dimethylaniline as substrate (at pH 8.4 and 37 degrees Celsius)</Vmax>
        <Vmax evidence="5">1.34 nmol/min/mg enzyme with trimethylamine as substrate (at pH 8.4 and 37 degrees Celsius)</Vmax>
    </kinetics>
</comment>
<comment type="subcellular location">
    <subcellularLocation>
        <location evidence="5">Endoplasmic reticulum membrane</location>
        <topology evidence="4">Single-pass membrane protein</topology>
    </subcellularLocation>
</comment>
<comment type="tissue specificity">
    <text evidence="5">Expressed in liver, lung and kidney and to a lesser extent in the heart and brain.</text>
</comment>
<comment type="similarity">
    <text evidence="7">Belongs to the FMO family.</text>
</comment>
<accession>P36365</accession>
<accession>Q6P7Q5</accession>
<feature type="chain" id="PRO_0000147643" description="Flavin-containing monooxygenase 1">
    <location>
        <begin position="1"/>
        <end position="532"/>
    </location>
</feature>
<feature type="topological domain" description="Lumenal" evidence="1">
    <location>
        <begin position="1"/>
        <end position="510"/>
    </location>
</feature>
<feature type="transmembrane region" description="Helical" evidence="4">
    <location>
        <begin position="511"/>
        <end position="531"/>
    </location>
</feature>
<feature type="topological domain" description="Cytoplasmic" evidence="1">
    <location>
        <position position="532"/>
    </location>
</feature>
<feature type="binding site" evidence="3">
    <location>
        <begin position="9"/>
        <end position="13"/>
    </location>
    <ligand>
        <name>FAD</name>
        <dbReference type="ChEBI" id="CHEBI:57692"/>
    </ligand>
</feature>
<feature type="binding site" evidence="3">
    <location>
        <position position="32"/>
    </location>
    <ligand>
        <name>FAD</name>
        <dbReference type="ChEBI" id="CHEBI:57692"/>
    </ligand>
</feature>
<feature type="binding site" evidence="3">
    <location>
        <begin position="40"/>
        <end position="41"/>
    </location>
    <ligand>
        <name>FAD</name>
        <dbReference type="ChEBI" id="CHEBI:57692"/>
    </ligand>
</feature>
<feature type="binding site" evidence="3">
    <location>
        <begin position="60"/>
        <end position="61"/>
    </location>
    <ligand>
        <name>NADP(+)</name>
        <dbReference type="ChEBI" id="CHEBI:58349"/>
    </ligand>
</feature>
<feature type="binding site" evidence="3">
    <location>
        <begin position="61"/>
        <end position="62"/>
    </location>
    <ligand>
        <name>FAD</name>
        <dbReference type="ChEBI" id="CHEBI:57692"/>
    </ligand>
</feature>
<feature type="binding site" evidence="3">
    <location>
        <begin position="195"/>
        <end position="198"/>
    </location>
    <ligand>
        <name>NADP(+)</name>
        <dbReference type="ChEBI" id="CHEBI:58349"/>
    </ligand>
</feature>
<feature type="site" description="Important for substrate binding" evidence="1">
    <location>
        <position position="208"/>
    </location>
</feature>
<feature type="sequence conflict" description="In Ref. 1; AAA41165." evidence="7" ref="1">
    <original>D</original>
    <variation>A</variation>
    <location>
        <position position="141"/>
    </location>
</feature>
<name>FMO1_RAT</name>